<dbReference type="EMBL" id="DS496122">
    <property type="protein sequence ID" value="EDP04202.1"/>
    <property type="status" value="ALT_SEQ"/>
    <property type="molecule type" value="Genomic_DNA"/>
</dbReference>
<dbReference type="PDB" id="5DE3">
    <property type="method" value="X-ray"/>
    <property type="resolution" value="1.42 A"/>
    <property type="chains" value="A=17-177"/>
</dbReference>
<dbReference type="PDB" id="5DI3">
    <property type="method" value="X-ray"/>
    <property type="resolution" value="2.50 A"/>
    <property type="chains" value="A=1-177"/>
</dbReference>
<dbReference type="PDBsum" id="5DE3"/>
<dbReference type="PDBsum" id="5DI3"/>
<dbReference type="SMR" id="A8ISN6"/>
<dbReference type="PaxDb" id="3055-EDP04202"/>
<dbReference type="ProMEX" id="A8ISN6"/>
<dbReference type="EnsemblPlants" id="PNW84028">
    <property type="protein sequence ID" value="PNW84028"/>
    <property type="gene ID" value="CHLRE_04g218250v5"/>
</dbReference>
<dbReference type="Gramene" id="PNW84028">
    <property type="protein sequence ID" value="PNW84028"/>
    <property type="gene ID" value="CHLRE_04g218250v5"/>
</dbReference>
<dbReference type="eggNOG" id="KOG0074">
    <property type="taxonomic scope" value="Eukaryota"/>
</dbReference>
<dbReference type="HOGENOM" id="CLU_040729_12_0_1"/>
<dbReference type="OMA" id="EGMEWVC"/>
<dbReference type="OrthoDB" id="2011769at2759"/>
<dbReference type="EvolutionaryTrace" id="A8ISN6"/>
<dbReference type="GO" id="GO:0000139">
    <property type="term" value="C:Golgi membrane"/>
    <property type="evidence" value="ECO:0007669"/>
    <property type="project" value="UniProtKB-SubCell"/>
</dbReference>
<dbReference type="GO" id="GO:0005815">
    <property type="term" value="C:microtubule organizing center"/>
    <property type="evidence" value="ECO:0007669"/>
    <property type="project" value="UniProtKB-SubCell"/>
</dbReference>
<dbReference type="GO" id="GO:0005634">
    <property type="term" value="C:nucleus"/>
    <property type="evidence" value="ECO:0007669"/>
    <property type="project" value="UniProtKB-SubCell"/>
</dbReference>
<dbReference type="GO" id="GO:0005819">
    <property type="term" value="C:spindle"/>
    <property type="evidence" value="ECO:0007669"/>
    <property type="project" value="UniProtKB-SubCell"/>
</dbReference>
<dbReference type="GO" id="GO:0005525">
    <property type="term" value="F:GTP binding"/>
    <property type="evidence" value="ECO:0007669"/>
    <property type="project" value="UniProtKB-KW"/>
</dbReference>
<dbReference type="GO" id="GO:0003924">
    <property type="term" value="F:GTPase activity"/>
    <property type="evidence" value="ECO:0007669"/>
    <property type="project" value="InterPro"/>
</dbReference>
<dbReference type="GO" id="GO:0051301">
    <property type="term" value="P:cell division"/>
    <property type="evidence" value="ECO:0007669"/>
    <property type="project" value="UniProtKB-KW"/>
</dbReference>
<dbReference type="GO" id="GO:0015031">
    <property type="term" value="P:protein transport"/>
    <property type="evidence" value="ECO:0007669"/>
    <property type="project" value="UniProtKB-KW"/>
</dbReference>
<dbReference type="CDD" id="cd04155">
    <property type="entry name" value="Arl3"/>
    <property type="match status" value="1"/>
</dbReference>
<dbReference type="FunFam" id="3.40.50.300:FF:000281">
    <property type="entry name" value="ADP-ribosylation factor-like protein 3"/>
    <property type="match status" value="1"/>
</dbReference>
<dbReference type="Gene3D" id="3.40.50.300">
    <property type="entry name" value="P-loop containing nucleotide triphosphate hydrolases"/>
    <property type="match status" value="1"/>
</dbReference>
<dbReference type="InterPro" id="IPR044612">
    <property type="entry name" value="ARL2/3"/>
</dbReference>
<dbReference type="InterPro" id="IPR027417">
    <property type="entry name" value="P-loop_NTPase"/>
</dbReference>
<dbReference type="InterPro" id="IPR005225">
    <property type="entry name" value="Small_GTP-bd"/>
</dbReference>
<dbReference type="InterPro" id="IPR006689">
    <property type="entry name" value="Small_GTPase_ARF/SAR"/>
</dbReference>
<dbReference type="NCBIfam" id="TIGR00231">
    <property type="entry name" value="small_GTP"/>
    <property type="match status" value="1"/>
</dbReference>
<dbReference type="PANTHER" id="PTHR45697">
    <property type="entry name" value="ADP-RIBOSYLATION FACTOR-LIKE PROTEIN 2-RELATED"/>
    <property type="match status" value="1"/>
</dbReference>
<dbReference type="Pfam" id="PF00025">
    <property type="entry name" value="Arf"/>
    <property type="match status" value="1"/>
</dbReference>
<dbReference type="PRINTS" id="PR00328">
    <property type="entry name" value="SAR1GTPBP"/>
</dbReference>
<dbReference type="SMART" id="SM00177">
    <property type="entry name" value="ARF"/>
    <property type="match status" value="1"/>
</dbReference>
<dbReference type="SMART" id="SM00178">
    <property type="entry name" value="SAR"/>
    <property type="match status" value="1"/>
</dbReference>
<dbReference type="SUPFAM" id="SSF52540">
    <property type="entry name" value="P-loop containing nucleoside triphosphate hydrolases"/>
    <property type="match status" value="1"/>
</dbReference>
<dbReference type="PROSITE" id="PS51417">
    <property type="entry name" value="ARF"/>
    <property type="match status" value="1"/>
</dbReference>
<evidence type="ECO:0000250" key="1">
    <source>
        <dbReference type="UniProtKB" id="P11076"/>
    </source>
</evidence>
<evidence type="ECO:0000250" key="2">
    <source>
        <dbReference type="UniProtKB" id="P36405"/>
    </source>
</evidence>
<evidence type="ECO:0000250" key="3">
    <source>
        <dbReference type="UniProtKB" id="P84080"/>
    </source>
</evidence>
<evidence type="ECO:0000250" key="4">
    <source>
        <dbReference type="UniProtKB" id="Q8QHI3"/>
    </source>
</evidence>
<evidence type="ECO:0000255" key="5"/>
<evidence type="ECO:0000305" key="6"/>
<evidence type="ECO:0000312" key="7">
    <source>
        <dbReference type="EMBL" id="EDP04202.1"/>
    </source>
</evidence>
<evidence type="ECO:0007829" key="8">
    <source>
        <dbReference type="PDB" id="5DE3"/>
    </source>
</evidence>
<accession>A8ISN6</accession>
<organism>
    <name type="scientific">Chlamydomonas reinhardtii</name>
    <name type="common">Chlamydomonas smithii</name>
    <dbReference type="NCBI Taxonomy" id="3055"/>
    <lineage>
        <taxon>Eukaryota</taxon>
        <taxon>Viridiplantae</taxon>
        <taxon>Chlorophyta</taxon>
        <taxon>core chlorophytes</taxon>
        <taxon>Chlorophyceae</taxon>
        <taxon>CS clade</taxon>
        <taxon>Chlamydomonadales</taxon>
        <taxon>Chlamydomonadaceae</taxon>
        <taxon>Chlamydomonas</taxon>
    </lineage>
</organism>
<proteinExistence type="evidence at protein level"/>
<comment type="function">
    <text evidence="2">Small GTP-binding protein which cycles between an inactive GDP-bound and an active GTP-bound form, and the rate of cycling is regulated by guanine nucleotide exchange factors (GEF) and GTPase-activating proteins (GAP). Required for normal cytokinesis and cilia signaling. Required for targeting proteins to the ciliary membrane by releasing myristoylated protein from unc119 cargo adapters into the cilium.</text>
</comment>
<comment type="subcellular location">
    <subcellularLocation>
        <location evidence="2">Golgi apparatus membrane</location>
        <topology evidence="2">Peripheral membrane protein</topology>
        <orientation evidence="2">Cytoplasmic side</orientation>
    </subcellularLocation>
    <subcellularLocation>
        <location evidence="2">Cytoplasm</location>
        <location evidence="2">Cytoskeleton</location>
        <location evidence="2">Spindle</location>
    </subcellularLocation>
    <subcellularLocation>
        <location evidence="2">Nucleus</location>
    </subcellularLocation>
    <subcellularLocation>
        <location evidence="2">Cytoplasm</location>
        <location evidence="2">Cytoskeleton</location>
        <location evidence="2">Microtubule organizing center</location>
    </subcellularLocation>
    <subcellularLocation>
        <location evidence="2">Cytoplasm</location>
    </subcellularLocation>
    <text evidence="2">Not detected to interphase microtubules. Present on the mitotic spindle.</text>
</comment>
<comment type="similarity">
    <text evidence="6">Belongs to the small GTPase superfamily. Arf family.</text>
</comment>
<comment type="sequence caution" evidence="6">
    <conflict type="erroneous gene model prediction">
        <sequence resource="EMBL-CDS" id="EDP04202"/>
    </conflict>
</comment>
<name>ARL3_CHLRE</name>
<reference key="1">
    <citation type="unpublished observations" date="2015-09">
        <authorList>
            <person name="Gotthardt K."/>
        </authorList>
    </citation>
    <scope>NUCLEOTIDE SEQUENCE [MRNA]</scope>
</reference>
<reference key="2">
    <citation type="journal article" date="2007" name="Science">
        <title>The Chlamydomonas genome reveals the evolution of key animal and plant functions.</title>
        <authorList>
            <person name="Merchant S.S."/>
            <person name="Prochnik S.E."/>
            <person name="Vallon O."/>
            <person name="Harris E.H."/>
            <person name="Karpowicz S.J."/>
            <person name="Witman G.B."/>
            <person name="Terry A."/>
            <person name="Salamov A."/>
            <person name="Fritz-Laylin L.K."/>
            <person name="Marechal-Drouard L."/>
            <person name="Marshall W.F."/>
            <person name="Qu L.H."/>
            <person name="Nelson D.R."/>
            <person name="Sanderfoot A.A."/>
            <person name="Spalding M.H."/>
            <person name="Kapitonov V.V."/>
            <person name="Ren Q."/>
            <person name="Ferris P."/>
            <person name="Lindquist E."/>
            <person name="Shapiro H."/>
            <person name="Lucas S.M."/>
            <person name="Grimwood J."/>
            <person name="Schmutz J."/>
            <person name="Cardol P."/>
            <person name="Cerutti H."/>
            <person name="Chanfreau G."/>
            <person name="Chen C.L."/>
            <person name="Cognat V."/>
            <person name="Croft M.T."/>
            <person name="Dent R."/>
            <person name="Dutcher S."/>
            <person name="Fernandez E."/>
            <person name="Fukuzawa H."/>
            <person name="Gonzalez-Ballester D."/>
            <person name="Gonzalez-Halphen D."/>
            <person name="Hallmann A."/>
            <person name="Hanikenne M."/>
            <person name="Hippler M."/>
            <person name="Inwood W."/>
            <person name="Jabbari K."/>
            <person name="Kalanon M."/>
            <person name="Kuras R."/>
            <person name="Lefebvre P.A."/>
            <person name="Lemaire S.D."/>
            <person name="Lobanov A.V."/>
            <person name="Lohr M."/>
            <person name="Manuell A."/>
            <person name="Meier I."/>
            <person name="Mets L."/>
            <person name="Mittag M."/>
            <person name="Mittelmeier T."/>
            <person name="Moroney J.V."/>
            <person name="Moseley J."/>
            <person name="Napoli C."/>
            <person name="Nedelcu A.M."/>
            <person name="Niyogi K."/>
            <person name="Novoselov S.V."/>
            <person name="Paulsen I.T."/>
            <person name="Pazour G.J."/>
            <person name="Purton S."/>
            <person name="Ral J.P."/>
            <person name="Riano-Pachon D.M."/>
            <person name="Riekhof W."/>
            <person name="Rymarquis L."/>
            <person name="Schroda M."/>
            <person name="Stern D."/>
            <person name="Umen J."/>
            <person name="Willows R."/>
            <person name="Wilson N."/>
            <person name="Zimmer S.L."/>
            <person name="Allmer J."/>
            <person name="Balk J."/>
            <person name="Bisova K."/>
            <person name="Chen C.J."/>
            <person name="Elias M."/>
            <person name="Gendler K."/>
            <person name="Hauser C."/>
            <person name="Lamb M.R."/>
            <person name="Ledford H."/>
            <person name="Long J.C."/>
            <person name="Minagawa J."/>
            <person name="Page M.D."/>
            <person name="Pan J."/>
            <person name="Pootakham W."/>
            <person name="Roje S."/>
            <person name="Rose A."/>
            <person name="Stahlberg E."/>
            <person name="Terauchi A.M."/>
            <person name="Yang P."/>
            <person name="Ball S."/>
            <person name="Bowler C."/>
            <person name="Dieckmann C.L."/>
            <person name="Gladyshev V.N."/>
            <person name="Green P."/>
            <person name="Jorgensen R."/>
            <person name="Mayfield S."/>
            <person name="Mueller-Roeber B."/>
            <person name="Rajamani S."/>
            <person name="Sayre R.T."/>
            <person name="Brokstein P."/>
            <person name="Dubchak I."/>
            <person name="Goodstein D."/>
            <person name="Hornick L."/>
            <person name="Huang Y.W."/>
            <person name="Jhaveri J."/>
            <person name="Luo Y."/>
            <person name="Martinez D."/>
            <person name="Ngau W.C."/>
            <person name="Otillar B."/>
            <person name="Poliakov A."/>
            <person name="Porter A."/>
            <person name="Szajkowski L."/>
            <person name="Werner G."/>
            <person name="Zhou K."/>
            <person name="Grigoriev I.V."/>
            <person name="Rokhsar D.S."/>
            <person name="Grossman A.R."/>
        </authorList>
    </citation>
    <scope>NUCLEOTIDE SEQUENCE [LARGE SCALE GENOMIC DNA]</scope>
    <source>
        <strain>CC-503</strain>
    </source>
</reference>
<sequence>MGLLSLIRGLKKKEGEARILVLGLDNAGKTTILKALSEEDITTITPTQGFNIKSLSRDGFNLKIWDIGGQKSIRPYWRNYFDQTDALIYVIDSADSKRLSESEFELTELLQEEKMTGVPLLVFANKQDLVGALAADEIASTLDLTSIRDRPWQIQACSAKQGTGLKEGMEWMMKQVK</sequence>
<protein>
    <recommendedName>
        <fullName evidence="4">ADP-ribosylation factor-like protein 3</fullName>
    </recommendedName>
</protein>
<feature type="initiator methionine" description="Removed" evidence="5">
    <location>
        <position position="1"/>
    </location>
</feature>
<feature type="chain" id="PRO_0000434553" description="ADP-ribosylation factor-like protein 3">
    <location>
        <begin position="2"/>
        <end position="177"/>
    </location>
</feature>
<feature type="binding site" evidence="3">
    <location>
        <begin position="23"/>
        <end position="31"/>
    </location>
    <ligand>
        <name>GTP</name>
        <dbReference type="ChEBI" id="CHEBI:37565"/>
    </ligand>
</feature>
<feature type="binding site" evidence="3">
    <location>
        <begin position="125"/>
        <end position="128"/>
    </location>
    <ligand>
        <name>GTP</name>
        <dbReference type="ChEBI" id="CHEBI:37565"/>
    </ligand>
</feature>
<feature type="binding site" evidence="3">
    <location>
        <position position="159"/>
    </location>
    <ligand>
        <name>GTP</name>
        <dbReference type="ChEBI" id="CHEBI:37565"/>
    </ligand>
</feature>
<feature type="lipid moiety-binding region" description="N-myristoyl glycine" evidence="1">
    <location>
        <position position="2"/>
    </location>
</feature>
<feature type="strand" evidence="8">
    <location>
        <begin position="18"/>
        <end position="22"/>
    </location>
</feature>
<feature type="helix" evidence="8">
    <location>
        <begin position="29"/>
        <end position="36"/>
    </location>
</feature>
<feature type="strand" evidence="8">
    <location>
        <begin position="48"/>
        <end position="57"/>
    </location>
</feature>
<feature type="strand" evidence="8">
    <location>
        <begin position="60"/>
        <end position="67"/>
    </location>
</feature>
<feature type="helix" evidence="8">
    <location>
        <begin position="71"/>
        <end position="80"/>
    </location>
</feature>
<feature type="strand" evidence="8">
    <location>
        <begin position="86"/>
        <end position="92"/>
    </location>
</feature>
<feature type="helix" evidence="8">
    <location>
        <begin position="96"/>
        <end position="98"/>
    </location>
</feature>
<feature type="helix" evidence="8">
    <location>
        <begin position="99"/>
        <end position="110"/>
    </location>
</feature>
<feature type="helix" evidence="8">
    <location>
        <begin position="113"/>
        <end position="115"/>
    </location>
</feature>
<feature type="strand" evidence="8">
    <location>
        <begin position="120"/>
        <end position="125"/>
    </location>
</feature>
<feature type="helix" evidence="8">
    <location>
        <begin position="135"/>
        <end position="141"/>
    </location>
</feature>
<feature type="helix" evidence="8">
    <location>
        <begin position="144"/>
        <end position="146"/>
    </location>
</feature>
<feature type="strand" evidence="8">
    <location>
        <begin position="152"/>
        <end position="156"/>
    </location>
</feature>
<feature type="turn" evidence="8">
    <location>
        <begin position="159"/>
        <end position="161"/>
    </location>
</feature>
<feature type="helix" evidence="8">
    <location>
        <begin position="165"/>
        <end position="176"/>
    </location>
</feature>
<keyword id="KW-0002">3D-structure</keyword>
<keyword id="KW-0131">Cell cycle</keyword>
<keyword id="KW-0132">Cell division</keyword>
<keyword id="KW-0963">Cytoplasm</keyword>
<keyword id="KW-0206">Cytoskeleton</keyword>
<keyword id="KW-0333">Golgi apparatus</keyword>
<keyword id="KW-0342">GTP-binding</keyword>
<keyword id="KW-0449">Lipoprotein</keyword>
<keyword id="KW-0472">Membrane</keyword>
<keyword id="KW-0519">Myristate</keyword>
<keyword id="KW-0547">Nucleotide-binding</keyword>
<keyword id="KW-0539">Nucleus</keyword>
<keyword id="KW-0653">Protein transport</keyword>
<keyword id="KW-0813">Transport</keyword>
<gene>
    <name evidence="4" type="primary">ARL3</name>
    <name evidence="7" type="ORF">CHLREDRAFT_128761</name>
</gene>